<proteinExistence type="evidence at transcript level"/>
<sequence length="682" mass="79019">MWLKLFFLLLYFLVLFVLARFFEAIVWYETGIFATQLVDPVALSFKKLKTILECRGLGYSGLPEKKDVRELVEKSGDLMEGELYSALKEEEASESVSSTNFSGEMHFYELVEDTKDGIWLVQVIANDRSPLVGKIHWEKMVKKVSRFGIRTGTFNCSSDPRYCRRRGWVRSTLIMSVPQTSTSKGKVMLKEYSGRKIEVEHIFKWITAHAASRIKTIYNVEHLKEEWNKSDQYWVKIYLFANLDQPPAFFSALSIKFTGRVEFIFVNVENWNNKSYMTDIGIYNMPSYILRTPEGIYRYGNHTGEFISLQAMDSFLRSLQPEVNDLFVLSLVLVNLMAWMDLFITQGATIKRFVVLISTLGTYNSLLIISWLPVLGFLQLPYLDSFYEYSLRLLRYSNTTTLASWVRADWMFYSSHPALFLSTYLGHGLLIDYFEKKRRRSNNDEVNANNLEWLSSLWDWYTSYLFHPIASFQNFPVDSDWDEDPDLFLERLAFPDLWLHPLIPTDYIKNLPMWRFKCLGAQSEEEMSESSQDTENDSDSDNTDTFSSSKDVFEDKQNVHSSPGRTSRCDTEACSCANKCVSSPCERKRRSYGSHNTKEDMEPDWLTWPAGTLHCTECVVCLENFENGCLLMGLPCGHVFHQNCIVMWLAGGRHCCPVCRWPSYKKKQPYAQQQPLSNDAPS</sequence>
<protein>
    <recommendedName>
        <fullName>E3 ubiquitin-protein ligase RNF103</fullName>
        <ecNumber>2.3.2.27</ecNumber>
    </recommendedName>
    <alternativeName>
        <fullName>Protein ADRG34</fullName>
    </alternativeName>
    <alternativeName>
        <fullName>RING finger protein 103</fullName>
    </alternativeName>
    <alternativeName>
        <fullName evidence="7">RING-type E3 ubiquitin transferase RNF103</fullName>
    </alternativeName>
    <alternativeName>
        <fullName>Zinc finger protein 103</fullName>
        <shortName>Zfp-103</shortName>
    </alternativeName>
</protein>
<keyword id="KW-0256">Endoplasmic reticulum</keyword>
<keyword id="KW-0472">Membrane</keyword>
<keyword id="KW-0479">Metal-binding</keyword>
<keyword id="KW-1185">Reference proteome</keyword>
<keyword id="KW-0808">Transferase</keyword>
<keyword id="KW-0812">Transmembrane</keyword>
<keyword id="KW-1133">Transmembrane helix</keyword>
<keyword id="KW-0833">Ubl conjugation pathway</keyword>
<keyword id="KW-0862">Zinc</keyword>
<keyword id="KW-0863">Zinc-finger</keyword>
<reference key="1">
    <citation type="journal article" date="2000" name="Biochem. Biophys. Res. Commun.">
        <title>Identification of a novel gene with RING-H2 finger motif induced after chronic antidepressant treatment in rat brain.</title>
        <authorList>
            <person name="Yamada M."/>
            <person name="Yamada M."/>
            <person name="Yamazaki S."/>
            <person name="Takahashi K."/>
            <person name="Nishioka G."/>
            <person name="Kudo K."/>
            <person name="Ozawa H."/>
            <person name="Yamada S."/>
            <person name="Kiuchi Y."/>
            <person name="Kamijima K."/>
            <person name="Higuchi T."/>
            <person name="Momose K."/>
        </authorList>
    </citation>
    <scope>NUCLEOTIDE SEQUENCE [MRNA]</scope>
    <scope>TISSUE SPECIFICITY</scope>
    <source>
        <strain>Sprague-Dawley</strain>
        <tissue>Brain</tissue>
    </source>
</reference>
<reference key="2">
    <citation type="journal article" date="2008" name="Biochem. Biophys. Res. Commun.">
        <title>Ubiquitin ligase Kf-1 is involved in the endoplasmic reticulum-associated degradation pathway.</title>
        <authorList>
            <person name="Maruyama Y."/>
            <person name="Yamada M."/>
            <person name="Takahashi K."/>
            <person name="Yamada M."/>
        </authorList>
    </citation>
    <scope>TISSUE SPECIFICITY</scope>
</reference>
<feature type="chain" id="PRO_0000056086" description="E3 ubiquitin-protein ligase RNF103">
    <location>
        <begin position="1"/>
        <end position="682"/>
    </location>
</feature>
<feature type="transmembrane region" description="Helical" evidence="2">
    <location>
        <begin position="6"/>
        <end position="26"/>
    </location>
</feature>
<feature type="transmembrane region" description="Helical" evidence="2">
    <location>
        <begin position="326"/>
        <end position="346"/>
    </location>
</feature>
<feature type="transmembrane region" description="Helical" evidence="2">
    <location>
        <begin position="366"/>
        <end position="386"/>
    </location>
</feature>
<feature type="transmembrane region" description="Helical" evidence="2">
    <location>
        <begin position="411"/>
        <end position="431"/>
    </location>
</feature>
<feature type="zinc finger region" description="RING-type" evidence="3">
    <location>
        <begin position="618"/>
        <end position="660"/>
    </location>
</feature>
<feature type="region of interest" description="Disordered" evidence="4">
    <location>
        <begin position="525"/>
        <end position="549"/>
    </location>
</feature>
<feature type="compositionally biased region" description="Acidic residues" evidence="4">
    <location>
        <begin position="525"/>
        <end position="542"/>
    </location>
</feature>
<gene>
    <name type="primary">Rnf103</name>
    <name type="synonym">Zfp103</name>
</gene>
<name>RN103_RAT</name>
<accession>Q9EPZ8</accession>
<dbReference type="EC" id="2.3.2.27"/>
<dbReference type="EMBL" id="AF306394">
    <property type="protein sequence ID" value="AAG37065.1"/>
    <property type="molecule type" value="mRNA"/>
</dbReference>
<dbReference type="SMR" id="Q9EPZ8"/>
<dbReference type="FunCoup" id="Q9EPZ8">
    <property type="interactions" value="748"/>
</dbReference>
<dbReference type="STRING" id="10116.ENSRNOP00000062726"/>
<dbReference type="PhosphoSitePlus" id="Q9EPZ8"/>
<dbReference type="PaxDb" id="10116-ENSRNOP00000062726"/>
<dbReference type="UCSC" id="RGD:620586">
    <property type="organism name" value="rat"/>
</dbReference>
<dbReference type="AGR" id="RGD:620586"/>
<dbReference type="RGD" id="620586">
    <property type="gene designation" value="Rnf103"/>
</dbReference>
<dbReference type="eggNOG" id="KOG0800">
    <property type="taxonomic scope" value="Eukaryota"/>
</dbReference>
<dbReference type="InParanoid" id="Q9EPZ8"/>
<dbReference type="BRENDA" id="2.3.2.27">
    <property type="organism ID" value="5301"/>
</dbReference>
<dbReference type="UniPathway" id="UPA00143"/>
<dbReference type="PRO" id="PR:Q9EPZ8"/>
<dbReference type="Proteomes" id="UP000002494">
    <property type="component" value="Unplaced"/>
</dbReference>
<dbReference type="GO" id="GO:0005783">
    <property type="term" value="C:endoplasmic reticulum"/>
    <property type="evidence" value="ECO:0000250"/>
    <property type="project" value="UniProtKB"/>
</dbReference>
<dbReference type="GO" id="GO:0005789">
    <property type="term" value="C:endoplasmic reticulum membrane"/>
    <property type="evidence" value="ECO:0007669"/>
    <property type="project" value="UniProtKB-SubCell"/>
</dbReference>
<dbReference type="GO" id="GO:0004842">
    <property type="term" value="F:ubiquitin-protein transferase activity"/>
    <property type="evidence" value="ECO:0000250"/>
    <property type="project" value="UniProtKB"/>
</dbReference>
<dbReference type="GO" id="GO:0008270">
    <property type="term" value="F:zinc ion binding"/>
    <property type="evidence" value="ECO:0007669"/>
    <property type="project" value="UniProtKB-KW"/>
</dbReference>
<dbReference type="GO" id="GO:0036503">
    <property type="term" value="P:ERAD pathway"/>
    <property type="evidence" value="ECO:0000266"/>
    <property type="project" value="RGD"/>
</dbReference>
<dbReference type="GO" id="GO:0016567">
    <property type="term" value="P:protein ubiquitination"/>
    <property type="evidence" value="ECO:0000250"/>
    <property type="project" value="UniProtKB"/>
</dbReference>
<dbReference type="CDD" id="cd16473">
    <property type="entry name" value="RING-H2_RNF103"/>
    <property type="match status" value="1"/>
</dbReference>
<dbReference type="Gene3D" id="3.30.40.10">
    <property type="entry name" value="Zinc/RING finger domain, C3HC4 (zinc finger)"/>
    <property type="match status" value="1"/>
</dbReference>
<dbReference type="InterPro" id="IPR042494">
    <property type="entry name" value="RNF103"/>
</dbReference>
<dbReference type="InterPro" id="IPR001841">
    <property type="entry name" value="Znf_RING"/>
</dbReference>
<dbReference type="InterPro" id="IPR013083">
    <property type="entry name" value="Znf_RING/FYVE/PHD"/>
</dbReference>
<dbReference type="PANTHER" id="PTHR15302">
    <property type="entry name" value="E3 UBIQUITIN-PROTEIN LIGASE RNF103"/>
    <property type="match status" value="1"/>
</dbReference>
<dbReference type="PANTHER" id="PTHR15302:SF0">
    <property type="entry name" value="E3 UBIQUITIN-PROTEIN LIGASE RNF103"/>
    <property type="match status" value="1"/>
</dbReference>
<dbReference type="Pfam" id="PF13639">
    <property type="entry name" value="zf-RING_2"/>
    <property type="match status" value="1"/>
</dbReference>
<dbReference type="SMART" id="SM00184">
    <property type="entry name" value="RING"/>
    <property type="match status" value="1"/>
</dbReference>
<dbReference type="SUPFAM" id="SSF57850">
    <property type="entry name" value="RING/U-box"/>
    <property type="match status" value="1"/>
</dbReference>
<dbReference type="PROSITE" id="PS50089">
    <property type="entry name" value="ZF_RING_2"/>
    <property type="match status" value="1"/>
</dbReference>
<comment type="function">
    <text evidence="1">Acts as an E2-dependent E3 ubiquitin-protein ligase, probably involved in the ER-associated protein degradation pathway.</text>
</comment>
<comment type="catalytic activity">
    <reaction>
        <text>S-ubiquitinyl-[E2 ubiquitin-conjugating enzyme]-L-cysteine + [acceptor protein]-L-lysine = [E2 ubiquitin-conjugating enzyme]-L-cysteine + N(6)-ubiquitinyl-[acceptor protein]-L-lysine.</text>
        <dbReference type="EC" id="2.3.2.27"/>
    </reaction>
</comment>
<comment type="pathway">
    <text>Protein modification; protein ubiquitination.</text>
</comment>
<comment type="subunit">
    <text evidence="1">Interacts with DERL1 and VCP.</text>
</comment>
<comment type="subcellular location">
    <subcellularLocation>
        <location evidence="1">Endoplasmic reticulum membrane</location>
        <topology evidence="1">Multi-pass membrane protein</topology>
    </subcellularLocation>
</comment>
<comment type="tissue specificity">
    <text evidence="5 6">Expressed in different tissues including hippocampus, cerebral cortex, heart, kidney, spleen and lung. Expression is increased in hippocampus and frontal cortex after chronic treatment with antidepressants.</text>
</comment>
<evidence type="ECO:0000250" key="1">
    <source>
        <dbReference type="UniProtKB" id="O00237"/>
    </source>
</evidence>
<evidence type="ECO:0000255" key="2"/>
<evidence type="ECO:0000255" key="3">
    <source>
        <dbReference type="PROSITE-ProRule" id="PRU00175"/>
    </source>
</evidence>
<evidence type="ECO:0000256" key="4">
    <source>
        <dbReference type="SAM" id="MobiDB-lite"/>
    </source>
</evidence>
<evidence type="ECO:0000269" key="5">
    <source>
    </source>
</evidence>
<evidence type="ECO:0000269" key="6">
    <source>
    </source>
</evidence>
<evidence type="ECO:0000305" key="7"/>
<organism>
    <name type="scientific">Rattus norvegicus</name>
    <name type="common">Rat</name>
    <dbReference type="NCBI Taxonomy" id="10116"/>
    <lineage>
        <taxon>Eukaryota</taxon>
        <taxon>Metazoa</taxon>
        <taxon>Chordata</taxon>
        <taxon>Craniata</taxon>
        <taxon>Vertebrata</taxon>
        <taxon>Euteleostomi</taxon>
        <taxon>Mammalia</taxon>
        <taxon>Eutheria</taxon>
        <taxon>Euarchontoglires</taxon>
        <taxon>Glires</taxon>
        <taxon>Rodentia</taxon>
        <taxon>Myomorpha</taxon>
        <taxon>Muroidea</taxon>
        <taxon>Muridae</taxon>
        <taxon>Murinae</taxon>
        <taxon>Rattus</taxon>
    </lineage>
</organism>